<proteinExistence type="evidence at protein level"/>
<comment type="function">
    <text evidence="1 8">May inhibit tumor metastasis (By similarity). In vitro, reduces cell motility.</text>
</comment>
<comment type="subunit">
    <text evidence="7">May interact with PAK1 and PAK2. Probably interacts with TARSH.</text>
</comment>
<comment type="interaction">
    <interactant intactId="EBI-742038">
        <id>Q9P2A4</id>
    </interactant>
    <interactant intactId="EBI-11096309">
        <id>Q9NYB9-2</id>
        <label>ABI2</label>
    </interactant>
    <organismsDiffer>false</organismsDiffer>
    <experiments>5</experiments>
</comment>
<comment type="interaction">
    <interactant intactId="EBI-742038">
        <id>Q9P2A4</id>
    </interactant>
    <interactant intactId="EBI-742038">
        <id>Q9P2A4</id>
        <label>ABI3</label>
    </interactant>
    <organismsDiffer>false</organismsDiffer>
    <experiments>4</experiments>
</comment>
<comment type="interaction">
    <interactant intactId="EBI-742038">
        <id>Q9P2A4</id>
    </interactant>
    <interactant intactId="EBI-750254">
        <id>Q9BRR9</id>
        <label>ARHGAP9</label>
    </interactant>
    <organismsDiffer>false</organismsDiffer>
    <experiments>3</experiments>
</comment>
<comment type="interaction">
    <interactant intactId="EBI-742038">
        <id>Q9P2A4</id>
    </interactant>
    <interactant intactId="EBI-742909">
        <id>Q9H6L4</id>
        <label>ARMC7</label>
    </interactant>
    <organismsDiffer>false</organismsDiffer>
    <experiments>3</experiments>
</comment>
<comment type="interaction">
    <interactant intactId="EBI-742038">
        <id>Q9P2A4</id>
    </interactant>
    <interactant intactId="EBI-10229433">
        <id>Q13515</id>
        <label>BFSP2</label>
    </interactant>
    <organismsDiffer>false</organismsDiffer>
    <experiments>5</experiments>
</comment>
<comment type="interaction">
    <interactant intactId="EBI-742038">
        <id>Q9P2A4</id>
    </interactant>
    <interactant intactId="EBI-465861">
        <id>Q8TDH9</id>
        <label>BLOC1S5</label>
    </interactant>
    <organismsDiffer>false</organismsDiffer>
    <experiments>3</experiments>
</comment>
<comment type="interaction">
    <interactant intactId="EBI-742038">
        <id>Q9P2A4</id>
    </interactant>
    <interactant intactId="EBI-2350265">
        <id>Q7L2Z9</id>
        <label>CENPQ</label>
    </interactant>
    <organismsDiffer>false</organismsDiffer>
    <experiments>3</experiments>
</comment>
<comment type="interaction">
    <interactant intactId="EBI-742038">
        <id>Q9P2A4</id>
    </interactant>
    <interactant intactId="EBI-744115">
        <id>Q9C0F1</id>
        <label>CEP44</label>
    </interactant>
    <organismsDiffer>false</organismsDiffer>
    <experiments>9</experiments>
</comment>
<comment type="interaction">
    <interactant intactId="EBI-742038">
        <id>Q9P2A4</id>
    </interactant>
    <interactant intactId="EBI-2806959">
        <id>Q6ICB0</id>
        <label>DESI1</label>
    </interactant>
    <organismsDiffer>false</organismsDiffer>
    <experiments>3</experiments>
</comment>
<comment type="interaction">
    <interactant intactId="EBI-742038">
        <id>Q9P2A4</id>
    </interactant>
    <interactant intactId="EBI-740402">
        <id>O60941</id>
        <label>DTNB</label>
    </interactant>
    <organismsDiffer>false</organismsDiffer>
    <experiments>3</experiments>
</comment>
<comment type="interaction">
    <interactant intactId="EBI-742038">
        <id>Q9P2A4</id>
    </interactant>
    <interactant intactId="EBI-709735">
        <id>O15372</id>
        <label>EIF3H</label>
    </interactant>
    <organismsDiffer>false</organismsDiffer>
    <experiments>6</experiments>
</comment>
<comment type="interaction">
    <interactant intactId="EBI-742038">
        <id>Q9P2A4</id>
    </interactant>
    <interactant intactId="EBI-353901">
        <id>Q7L2H7</id>
        <label>EIF3M</label>
    </interactant>
    <organismsDiffer>false</organismsDiffer>
    <experiments>3</experiments>
</comment>
<comment type="interaction">
    <interactant intactId="EBI-742038">
        <id>Q9P2A4</id>
    </interactant>
    <interactant intactId="EBI-10184995">
        <id>Q6IB98</id>
        <label>EIF3S3</label>
    </interactant>
    <organismsDiffer>false</organismsDiffer>
    <experiments>3</experiments>
</comment>
<comment type="interaction">
    <interactant intactId="EBI-742038">
        <id>Q9P2A4</id>
    </interactant>
    <interactant intactId="EBI-11748557">
        <id>Q9Y6C2-2</id>
        <label>EMILIN1</label>
    </interactant>
    <organismsDiffer>false</organismsDiffer>
    <experiments>3</experiments>
</comment>
<comment type="interaction">
    <interactant intactId="EBI-742038">
        <id>Q9P2A4</id>
    </interactant>
    <interactant intactId="EBI-346653">
        <id>Q9UI08</id>
        <label>EVL</label>
    </interactant>
    <organismsDiffer>false</organismsDiffer>
    <experiments>4</experiments>
</comment>
<comment type="interaction">
    <interactant intactId="EBI-742038">
        <id>Q9P2A4</id>
    </interactant>
    <interactant intactId="EBI-6448852">
        <id>Q9UI08-2</id>
        <label>EVL</label>
    </interactant>
    <organismsDiffer>false</organismsDiffer>
    <experiments>3</experiments>
</comment>
<comment type="interaction">
    <interactant intactId="EBI-742038">
        <id>Q9P2A4</id>
    </interactant>
    <interactant intactId="EBI-11986315">
        <id>Q9H5Z6-2</id>
        <label>FAM124B</label>
    </interactant>
    <organismsDiffer>false</organismsDiffer>
    <experiments>3</experiments>
</comment>
<comment type="interaction">
    <interactant intactId="EBI-742038">
        <id>Q9P2A4</id>
    </interactant>
    <interactant intactId="EBI-725361">
        <id>Q9Y285</id>
        <label>FARSA</label>
    </interactant>
    <organismsDiffer>false</organismsDiffer>
    <experiments>3</experiments>
</comment>
<comment type="interaction">
    <interactant intactId="EBI-742038">
        <id>Q9P2A4</id>
    </interactant>
    <interactant intactId="EBI-10244131">
        <id>Q8TES7-6</id>
        <label>FBF1</label>
    </interactant>
    <organismsDiffer>false</organismsDiffer>
    <experiments>3</experiments>
</comment>
<comment type="interaction">
    <interactant intactId="EBI-742038">
        <id>Q9P2A4</id>
    </interactant>
    <interactant intactId="EBI-11427343">
        <id>Q9P2W3</id>
        <label>GNG13</label>
    </interactant>
    <organismsDiffer>false</organismsDiffer>
    <experiments>3</experiments>
</comment>
<comment type="interaction">
    <interactant intactId="EBI-742038">
        <id>Q9P2A4</id>
    </interactant>
    <interactant intactId="EBI-712073">
        <id>Q8NBJ4</id>
        <label>GOLM1</label>
    </interactant>
    <organismsDiffer>false</organismsDiffer>
    <experiments>3</experiments>
</comment>
<comment type="interaction">
    <interactant intactId="EBI-742038">
        <id>Q9P2A4</id>
    </interactant>
    <interactant intactId="EBI-401755">
        <id>P62993</id>
        <label>GRB2</label>
    </interactant>
    <organismsDiffer>false</organismsDiffer>
    <experiments>3</experiments>
</comment>
<comment type="interaction">
    <interactant intactId="EBI-742038">
        <id>Q9P2A4</id>
    </interactant>
    <interactant intactId="EBI-746815">
        <id>Q86YM7</id>
        <label>HOMER1</label>
    </interactant>
    <organismsDiffer>false</organismsDiffer>
    <experiments>4</experiments>
</comment>
<comment type="interaction">
    <interactant intactId="EBI-742038">
        <id>Q9P2A4</id>
    </interactant>
    <interactant intactId="EBI-12017090">
        <id>Q9NSB8-2</id>
        <label>HOMER2</label>
    </interactant>
    <organismsDiffer>false</organismsDiffer>
    <experiments>3</experiments>
</comment>
<comment type="interaction">
    <interactant intactId="EBI-742038">
        <id>Q9P2A4</id>
    </interactant>
    <interactant intactId="EBI-748420">
        <id>Q9NSC5</id>
        <label>HOMER3</label>
    </interactant>
    <organismsDiffer>false</organismsDiffer>
    <experiments>8</experiments>
</comment>
<comment type="interaction">
    <interactant intactId="EBI-742038">
        <id>Q9P2A4</id>
    </interactant>
    <interactant intactId="EBI-9091197">
        <id>Q8IY31-3</id>
        <label>IFT20</label>
    </interactant>
    <organismsDiffer>false</organismsDiffer>
    <experiments>3</experiments>
</comment>
<comment type="interaction">
    <interactant intactId="EBI-742038">
        <id>Q9P2A4</id>
    </interactant>
    <interactant intactId="EBI-8638439">
        <id>Q8IYA8</id>
        <label>IHO1</label>
    </interactant>
    <organismsDiffer>false</organismsDiffer>
    <experiments>3</experiments>
</comment>
<comment type="interaction">
    <interactant intactId="EBI-742038">
        <id>Q9P2A4</id>
    </interactant>
    <interactant intactId="EBI-2556193">
        <id>Q63ZY3</id>
        <label>KANK2</label>
    </interactant>
    <organismsDiffer>false</organismsDiffer>
    <experiments>6</experiments>
</comment>
<comment type="interaction">
    <interactant intactId="EBI-742038">
        <id>Q9P2A4</id>
    </interactant>
    <interactant intactId="EBI-739493">
        <id>Q6ZU52</id>
        <label>KIAA0408</label>
    </interactant>
    <organismsDiffer>false</organismsDiffer>
    <experiments>4</experiments>
</comment>
<comment type="interaction">
    <interactant intactId="EBI-742038">
        <id>Q9P2A4</id>
    </interactant>
    <interactant intactId="EBI-14069005">
        <id>Q9BVG8-5</id>
        <label>KIFC3</label>
    </interactant>
    <organismsDiffer>false</organismsDiffer>
    <experiments>3</experiments>
</comment>
<comment type="interaction">
    <interactant intactId="EBI-742038">
        <id>Q9P2A4</id>
    </interactant>
    <interactant intactId="EBI-1643885">
        <id>Q6P597</id>
        <label>KLC3</label>
    </interactant>
    <organismsDiffer>false</organismsDiffer>
    <experiments>3</experiments>
</comment>
<comment type="interaction">
    <interactant intactId="EBI-742038">
        <id>Q9P2A4</id>
    </interactant>
    <interactant intactId="EBI-949319">
        <id>Q9NSK0</id>
        <label>KLC4</label>
    </interactant>
    <organismsDiffer>false</organismsDiffer>
    <experiments>3</experiments>
</comment>
<comment type="interaction">
    <interactant intactId="EBI-742038">
        <id>Q9P2A4</id>
    </interactant>
    <interactant intactId="EBI-10171552">
        <id>A1A4E9</id>
        <label>KRT13</label>
    </interactant>
    <organismsDiffer>false</organismsDiffer>
    <experiments>3</experiments>
</comment>
<comment type="interaction">
    <interactant intactId="EBI-742038">
        <id>Q9P2A4</id>
    </interactant>
    <interactant intactId="EBI-702178">
        <id>P02533</id>
        <label>KRT14</label>
    </interactant>
    <organismsDiffer>false</organismsDiffer>
    <experiments>3</experiments>
</comment>
<comment type="interaction">
    <interactant intactId="EBI-742038">
        <id>Q9P2A4</id>
    </interactant>
    <interactant intactId="EBI-2952736">
        <id>Q2M2I5</id>
        <label>KRT24</label>
    </interactant>
    <organismsDiffer>false</organismsDiffer>
    <experiments>3</experiments>
</comment>
<comment type="interaction">
    <interactant intactId="EBI-742038">
        <id>Q9P2A4</id>
    </interactant>
    <interactant intactId="EBI-11980489">
        <id>Q7Z3Y7</id>
        <label>KRT28</label>
    </interactant>
    <organismsDiffer>false</organismsDiffer>
    <experiments>3</experiments>
</comment>
<comment type="interaction">
    <interactant intactId="EBI-742038">
        <id>Q9P2A4</id>
    </interactant>
    <interactant intactId="EBI-948001">
        <id>Q15323</id>
        <label>KRT31</label>
    </interactant>
    <organismsDiffer>false</organismsDiffer>
    <experiments>3</experiments>
</comment>
<comment type="interaction">
    <interactant intactId="EBI-742038">
        <id>Q9P2A4</id>
    </interactant>
    <interactant intactId="EBI-1058674">
        <id>Q92764</id>
        <label>KRT35</label>
    </interactant>
    <organismsDiffer>false</organismsDiffer>
    <experiments>3</experiments>
</comment>
<comment type="interaction">
    <interactant intactId="EBI-742038">
        <id>Q9P2A4</id>
    </interactant>
    <interactant intactId="EBI-11958506">
        <id>O76013-2</id>
        <label>KRT36</label>
    </interactant>
    <organismsDiffer>false</organismsDiffer>
    <experiments>3</experiments>
</comment>
<comment type="interaction">
    <interactant intactId="EBI-742038">
        <id>Q9P2A4</id>
    </interactant>
    <interactant intactId="EBI-1047263">
        <id>O76015</id>
        <label>KRT38</label>
    </interactant>
    <organismsDiffer>false</organismsDiffer>
    <experiments>3</experiments>
</comment>
<comment type="interaction">
    <interactant intactId="EBI-742038">
        <id>Q9P2A4</id>
    </interactant>
    <interactant intactId="EBI-749530">
        <id>P43365</id>
        <label>MAGEA12</label>
    </interactant>
    <organismsDiffer>false</organismsDiffer>
    <experiments>3</experiments>
</comment>
<comment type="interaction">
    <interactant intactId="EBI-742038">
        <id>Q9P2A4</id>
    </interactant>
    <interactant intactId="EBI-394656">
        <id>Q9NX70</id>
        <label>MED29</label>
    </interactant>
    <organismsDiffer>false</organismsDiffer>
    <experiments>3</experiments>
</comment>
<comment type="interaction">
    <interactant intactId="EBI-742038">
        <id>Q9P2A4</id>
    </interactant>
    <interactant intactId="EBI-1104552">
        <id>Q9NYP9</id>
        <label>MIS18A</label>
    </interactant>
    <organismsDiffer>false</organismsDiffer>
    <experiments>3</experiments>
</comment>
<comment type="interaction">
    <interactant intactId="EBI-742038">
        <id>Q9P2A4</id>
    </interactant>
    <interactant intactId="EBI-995714">
        <id>Q9Y605</id>
        <label>MRFAP1</label>
    </interactant>
    <organismsDiffer>false</organismsDiffer>
    <experiments>3</experiments>
</comment>
<comment type="interaction">
    <interactant intactId="EBI-742038">
        <id>Q9P2A4</id>
    </interactant>
    <interactant intactId="EBI-748896">
        <id>Q96HT8</id>
        <label>MRFAP1L1</label>
    </interactant>
    <organismsDiffer>false</organismsDiffer>
    <experiments>3</experiments>
</comment>
<comment type="interaction">
    <interactant intactId="EBI-742038">
        <id>Q9P2A4</id>
    </interactant>
    <interactant intactId="EBI-713635">
        <id>O43639</id>
        <label>NCK2</label>
    </interactant>
    <organismsDiffer>false</organismsDiffer>
    <experiments>6</experiments>
</comment>
<comment type="interaction">
    <interactant intactId="EBI-742038">
        <id>Q9P2A4</id>
    </interactant>
    <interactant intactId="EBI-928842">
        <id>Q9GZM8</id>
        <label>NDEL1</label>
    </interactant>
    <organismsDiffer>false</organismsDiffer>
    <experiments>3</experiments>
</comment>
<comment type="interaction">
    <interactant intactId="EBI-742038">
        <id>Q9P2A4</id>
    </interactant>
    <interactant intactId="EBI-2859639">
        <id>Q5HYW2</id>
        <label>NHSL2</label>
    </interactant>
    <organismsDiffer>false</organismsDiffer>
    <experiments>3</experiments>
</comment>
<comment type="interaction">
    <interactant intactId="EBI-742038">
        <id>Q9P2A4</id>
    </interactant>
    <interactant intactId="EBI-2811583">
        <id>Q9BVL2</id>
        <label>NUP58</label>
    </interactant>
    <organismsDiffer>false</organismsDiffer>
    <experiments>7</experiments>
</comment>
<comment type="interaction">
    <interactant intactId="EBI-742038">
        <id>Q9P2A4</id>
    </interactant>
    <interactant intactId="EBI-536879">
        <id>O43482</id>
        <label>OIP5</label>
    </interactant>
    <organismsDiffer>false</organismsDiffer>
    <experiments>3</experiments>
</comment>
<comment type="interaction">
    <interactant intactId="EBI-742038">
        <id>Q9P2A4</id>
    </interactant>
    <interactant intactId="EBI-359352">
        <id>P25786</id>
        <label>PSMA1</label>
    </interactant>
    <organismsDiffer>false</organismsDiffer>
    <experiments>3</experiments>
</comment>
<comment type="interaction">
    <interactant intactId="EBI-742038">
        <id>Q9P2A4</id>
    </interactant>
    <interactant intactId="EBI-722392">
        <id>Q7L099</id>
        <label>RUFY3</label>
    </interactant>
    <organismsDiffer>false</organismsDiffer>
    <experiments>3</experiments>
</comment>
<comment type="interaction">
    <interactant intactId="EBI-742038">
        <id>Q9P2A4</id>
    </interactant>
    <interactant intactId="EBI-11984663">
        <id>Q06455-2</id>
        <label>RUNX1T1</label>
    </interactant>
    <organismsDiffer>false</organismsDiffer>
    <experiments>3</experiments>
</comment>
<comment type="interaction">
    <interactant intactId="EBI-742038">
        <id>Q9P2A4</id>
    </interactant>
    <interactant intactId="EBI-10224192">
        <id>Q06455-4</id>
        <label>RUNX1T1</label>
    </interactant>
    <organismsDiffer>false</organismsDiffer>
    <experiments>3</experiments>
</comment>
<comment type="interaction">
    <interactant intactId="EBI-742038">
        <id>Q9P2A4</id>
    </interactant>
    <interactant intactId="EBI-346869">
        <id>Q9Y3L3</id>
        <label>SH3BP1</label>
    </interactant>
    <organismsDiffer>false</organismsDiffer>
    <experiments>3</experiments>
</comment>
<comment type="interaction">
    <interactant intactId="EBI-742038">
        <id>Q9P2A4</id>
    </interactant>
    <interactant intactId="EBI-358489">
        <id>Q96GM5</id>
        <label>SMARCD1</label>
    </interactant>
    <organismsDiffer>false</organismsDiffer>
    <experiments>3</experiments>
</comment>
<comment type="interaction">
    <interactant intactId="EBI-742038">
        <id>Q9P2A4</id>
    </interactant>
    <interactant intactId="EBI-712466">
        <id>Q16623</id>
        <label>STX1A</label>
    </interactant>
    <organismsDiffer>false</organismsDiffer>
    <experiments>3</experiments>
</comment>
<comment type="interaction">
    <interactant intactId="EBI-742038">
        <id>Q9P2A4</id>
    </interactant>
    <interactant intactId="EBI-11956649">
        <id>P32856-2</id>
        <label>STX2</label>
    </interactant>
    <organismsDiffer>false</organismsDiffer>
    <experiments>3</experiments>
</comment>
<comment type="interaction">
    <interactant intactId="EBI-742038">
        <id>Q9P2A4</id>
    </interactant>
    <interactant intactId="EBI-740595">
        <id>Q9UMX1</id>
        <label>SUFU</label>
    </interactant>
    <organismsDiffer>false</organismsDiffer>
    <experiments>3</experiments>
</comment>
<comment type="interaction">
    <interactant intactId="EBI-742038">
        <id>Q9P2A4</id>
    </interactant>
    <interactant intactId="EBI-3650647">
        <id>Q9BUZ4</id>
        <label>TRAF4</label>
    </interactant>
    <organismsDiffer>false</organismsDiffer>
    <experiments>3</experiments>
</comment>
<comment type="interaction">
    <interactant intactId="EBI-742038">
        <id>Q9P2A4</id>
    </interactant>
    <interactant intactId="EBI-2932492">
        <id>Q99757</id>
        <label>TXN2</label>
    </interactant>
    <organismsDiffer>false</organismsDiffer>
    <experiments>3</experiments>
</comment>
<comment type="interaction">
    <interactant intactId="EBI-742038">
        <id>Q9P2A4</id>
    </interactant>
    <interactant intactId="EBI-2116622">
        <id>Q5ST30</id>
        <label>VARS2</label>
    </interactant>
    <organismsDiffer>false</organismsDiffer>
    <experiments>3</experiments>
</comment>
<comment type="interaction">
    <interactant intactId="EBI-742038">
        <id>Q9P2A4</id>
    </interactant>
    <interactant intactId="EBI-748201">
        <id>P50552</id>
        <label>VASP</label>
    </interactant>
    <organismsDiffer>false</organismsDiffer>
    <experiments>9</experiments>
</comment>
<comment type="interaction">
    <interactant intactId="EBI-742038">
        <id>Q9P2A4</id>
    </interactant>
    <interactant intactId="EBI-346375">
        <id>P42768</id>
        <label>WAS</label>
    </interactant>
    <organismsDiffer>false</organismsDiffer>
    <experiments>4</experiments>
</comment>
<comment type="interaction">
    <interactant intactId="EBI-742038">
        <id>Q9P2A4</id>
    </interactant>
    <interactant intactId="EBI-1548747">
        <id>Q92558</id>
        <label>WASF1</label>
    </interactant>
    <organismsDiffer>false</organismsDiffer>
    <experiments>3</experiments>
</comment>
<comment type="interaction">
    <interactant intactId="EBI-742038">
        <id>Q9P2A4</id>
    </interactant>
    <interactant intactId="EBI-10175581">
        <id>B2R8Y4</id>
    </interactant>
    <organismsDiffer>false</organismsDiffer>
    <experiments>3</experiments>
</comment>
<comment type="subcellular location">
    <subcellularLocation>
        <location evidence="8">Cytoplasm</location>
    </subcellularLocation>
    <text>Colocalizes with PAK2 at leading edge of cells.</text>
</comment>
<comment type="alternative products">
    <event type="alternative splicing"/>
    <isoform>
        <id>Q9P2A4-1</id>
        <name>1</name>
        <sequence type="displayed"/>
    </isoform>
    <isoform>
        <id>Q9P2A4-2</id>
        <name>2</name>
        <sequence type="described" ref="VSP_041467"/>
    </isoform>
</comment>
<comment type="tissue specificity">
    <text evidence="5">Expressed in heart, lung, liver, pancreas, kidney, placenta and at low levels in brain and skeletal muscle.</text>
</comment>
<comment type="similarity">
    <text evidence="10">Belongs to the ABI family.</text>
</comment>
<organism>
    <name type="scientific">Homo sapiens</name>
    <name type="common">Human</name>
    <dbReference type="NCBI Taxonomy" id="9606"/>
    <lineage>
        <taxon>Eukaryota</taxon>
        <taxon>Metazoa</taxon>
        <taxon>Chordata</taxon>
        <taxon>Craniata</taxon>
        <taxon>Vertebrata</taxon>
        <taxon>Euteleostomi</taxon>
        <taxon>Mammalia</taxon>
        <taxon>Eutheria</taxon>
        <taxon>Euarchontoglires</taxon>
        <taxon>Primates</taxon>
        <taxon>Haplorrhini</taxon>
        <taxon>Catarrhini</taxon>
        <taxon>Hominidae</taxon>
        <taxon>Homo</taxon>
    </lineage>
</organism>
<name>ABI3_HUMAN</name>
<keyword id="KW-0025">Alternative splicing</keyword>
<keyword id="KW-0175">Coiled coil</keyword>
<keyword id="KW-0963">Cytoplasm</keyword>
<keyword id="KW-0597">Phosphoprotein</keyword>
<keyword id="KW-1267">Proteomics identification</keyword>
<keyword id="KW-1185">Reference proteome</keyword>
<keyword id="KW-0728">SH3 domain</keyword>
<protein>
    <recommendedName>
        <fullName>ABI gene family member 3</fullName>
    </recommendedName>
    <alternativeName>
        <fullName>New molecule including SH3</fullName>
        <shortName>Nesh</shortName>
    </alternativeName>
</protein>
<reference key="1">
    <citation type="journal article" date="2000" name="Biochim. Biophys. Acta">
        <title>Isolation and characterization of a novel human gene (NESH) which encodes a putative signaling molecule similar to e3B1 protein.</title>
        <authorList>
            <person name="Miyazaki K."/>
            <person name="Matsuda S."/>
            <person name="Ichigotani Y."/>
            <person name="Takenouchi Y."/>
            <person name="Hayashi K."/>
            <person name="Fukuda Y."/>
            <person name="Nimura Y."/>
            <person name="Hamaguchi M."/>
        </authorList>
    </citation>
    <scope>NUCLEOTIDE SEQUENCE [MRNA] (ISOFORM 1)</scope>
    <scope>TISSUE SPECIFICITY</scope>
    <scope>VARIANT SER-209</scope>
    <source>
        <tissue>Placenta</tissue>
    </source>
</reference>
<reference key="2">
    <citation type="journal article" date="2001" name="Genome Res.">
        <title>Towards a catalog of human genes and proteins: sequencing and analysis of 500 novel complete protein coding human cDNAs.</title>
        <authorList>
            <person name="Wiemann S."/>
            <person name="Weil B."/>
            <person name="Wellenreuther R."/>
            <person name="Gassenhuber J."/>
            <person name="Glassl S."/>
            <person name="Ansorge W."/>
            <person name="Boecher M."/>
            <person name="Bloecker H."/>
            <person name="Bauersachs S."/>
            <person name="Blum H."/>
            <person name="Lauber J."/>
            <person name="Duesterhoeft A."/>
            <person name="Beyer A."/>
            <person name="Koehrer K."/>
            <person name="Strack N."/>
            <person name="Mewes H.-W."/>
            <person name="Ottenwaelder B."/>
            <person name="Obermaier B."/>
            <person name="Tampe J."/>
            <person name="Heubner D."/>
            <person name="Wambutt R."/>
            <person name="Korn B."/>
            <person name="Klein M."/>
            <person name="Poustka A."/>
        </authorList>
    </citation>
    <scope>NUCLEOTIDE SEQUENCE [LARGE SCALE MRNA] (ISOFORM 1)</scope>
    <scope>VARIANTS GLN-44 AND SER-209</scope>
    <source>
        <tissue>Kidney</tissue>
    </source>
</reference>
<reference key="3">
    <citation type="journal article" date="2006" name="Nature">
        <title>DNA sequence of human chromosome 17 and analysis of rearrangement in the human lineage.</title>
        <authorList>
            <person name="Zody M.C."/>
            <person name="Garber M."/>
            <person name="Adams D.J."/>
            <person name="Sharpe T."/>
            <person name="Harrow J."/>
            <person name="Lupski J.R."/>
            <person name="Nicholson C."/>
            <person name="Searle S.M."/>
            <person name="Wilming L."/>
            <person name="Young S.K."/>
            <person name="Abouelleil A."/>
            <person name="Allen N.R."/>
            <person name="Bi W."/>
            <person name="Bloom T."/>
            <person name="Borowsky M.L."/>
            <person name="Bugalter B.E."/>
            <person name="Butler J."/>
            <person name="Chang J.L."/>
            <person name="Chen C.-K."/>
            <person name="Cook A."/>
            <person name="Corum B."/>
            <person name="Cuomo C.A."/>
            <person name="de Jong P.J."/>
            <person name="DeCaprio D."/>
            <person name="Dewar K."/>
            <person name="FitzGerald M."/>
            <person name="Gilbert J."/>
            <person name="Gibson R."/>
            <person name="Gnerre S."/>
            <person name="Goldstein S."/>
            <person name="Grafham D.V."/>
            <person name="Grocock R."/>
            <person name="Hafez N."/>
            <person name="Hagopian D.S."/>
            <person name="Hart E."/>
            <person name="Norman C.H."/>
            <person name="Humphray S."/>
            <person name="Jaffe D.B."/>
            <person name="Jones M."/>
            <person name="Kamal M."/>
            <person name="Khodiyar V.K."/>
            <person name="LaButti K."/>
            <person name="Laird G."/>
            <person name="Lehoczky J."/>
            <person name="Liu X."/>
            <person name="Lokyitsang T."/>
            <person name="Loveland J."/>
            <person name="Lui A."/>
            <person name="Macdonald P."/>
            <person name="Major J.E."/>
            <person name="Matthews L."/>
            <person name="Mauceli E."/>
            <person name="McCarroll S.A."/>
            <person name="Mihalev A.H."/>
            <person name="Mudge J."/>
            <person name="Nguyen C."/>
            <person name="Nicol R."/>
            <person name="O'Leary S.B."/>
            <person name="Osoegawa K."/>
            <person name="Schwartz D.C."/>
            <person name="Shaw-Smith C."/>
            <person name="Stankiewicz P."/>
            <person name="Steward C."/>
            <person name="Swarbreck D."/>
            <person name="Venkataraman V."/>
            <person name="Whittaker C.A."/>
            <person name="Yang X."/>
            <person name="Zimmer A.R."/>
            <person name="Bradley A."/>
            <person name="Hubbard T."/>
            <person name="Birren B.W."/>
            <person name="Rogers J."/>
            <person name="Lander E.S."/>
            <person name="Nusbaum C."/>
        </authorList>
    </citation>
    <scope>NUCLEOTIDE SEQUENCE [LARGE SCALE GENOMIC DNA]</scope>
</reference>
<reference key="4">
    <citation type="journal article" date="2004" name="Genome Res.">
        <title>The status, quality, and expansion of the NIH full-length cDNA project: the Mammalian Gene Collection (MGC).</title>
        <authorList>
            <consortium name="The MGC Project Team"/>
        </authorList>
    </citation>
    <scope>NUCLEOTIDE SEQUENCE [LARGE SCALE MRNA] (ISOFORM 1)</scope>
    <scope>VARIANT SER-209</scope>
    <source>
        <tissue>B-cell</tissue>
    </source>
</reference>
<reference key="5">
    <citation type="journal article" date="2002" name="Cancer Res.">
        <title>Forced expression of NESH suppresses motility and metastatic dissemination of malignant cells.</title>
        <authorList>
            <person name="Ichigotani Y."/>
            <person name="Yokozaki S."/>
            <person name="Fukuda Y."/>
            <person name="Hamaguchi M."/>
            <person name="Matsuda S."/>
        </authorList>
    </citation>
    <scope>FUNCTION</scope>
    <scope>PHOSPHORYLATION</scope>
    <scope>SUBCELLULAR LOCATION</scope>
</reference>
<reference key="6">
    <citation type="journal article" date="2001" name="J. Hum. Genet.">
        <title>Cloning and sequencing of a novel human gene that encodes a putative target protein of Nesh-SH3.</title>
        <authorList>
            <person name="Matsuda S."/>
            <person name="Iriyama C."/>
            <person name="Yokozaki S."/>
            <person name="Ichigotani Y."/>
            <person name="Shirafuji N."/>
            <person name="Yamaki K."/>
            <person name="Hayakawa T."/>
            <person name="Hamaguchi M."/>
        </authorList>
    </citation>
    <scope>INTERACTION WITH TARSH</scope>
</reference>
<reference key="7">
    <citation type="journal article" date="2014" name="J. Proteomics">
        <title>An enzyme assisted RP-RPLC approach for in-depth analysis of human liver phosphoproteome.</title>
        <authorList>
            <person name="Bian Y."/>
            <person name="Song C."/>
            <person name="Cheng K."/>
            <person name="Dong M."/>
            <person name="Wang F."/>
            <person name="Huang J."/>
            <person name="Sun D."/>
            <person name="Wang L."/>
            <person name="Ye M."/>
            <person name="Zou H."/>
        </authorList>
    </citation>
    <scope>PHOSPHORYLATION [LARGE SCALE ANALYSIS] AT SER-213; SER-216 AND SER-342</scope>
    <scope>VARIANT [LARGE SCALE ANALYSIS] SER-209</scope>
    <scope>IDENTIFICATION BY MASS SPECTROMETRY [LARGE SCALE ANALYSIS]</scope>
    <source>
        <tissue>Liver</tissue>
    </source>
</reference>
<evidence type="ECO:0000250" key="1"/>
<evidence type="ECO:0000255" key="2"/>
<evidence type="ECO:0000255" key="3">
    <source>
        <dbReference type="PROSITE-ProRule" id="PRU00192"/>
    </source>
</evidence>
<evidence type="ECO:0000256" key="4">
    <source>
        <dbReference type="SAM" id="MobiDB-lite"/>
    </source>
</evidence>
<evidence type="ECO:0000269" key="5">
    <source>
    </source>
</evidence>
<evidence type="ECO:0000269" key="6">
    <source>
    </source>
</evidence>
<evidence type="ECO:0000269" key="7">
    <source>
    </source>
</evidence>
<evidence type="ECO:0000269" key="8">
    <source>
    </source>
</evidence>
<evidence type="ECO:0000269" key="9">
    <source>
    </source>
</evidence>
<evidence type="ECO:0000305" key="10"/>
<evidence type="ECO:0007744" key="11">
    <source>
    </source>
</evidence>
<gene>
    <name type="primary">ABI3</name>
    <name type="synonym">NESH</name>
</gene>
<dbReference type="EMBL" id="AB037886">
    <property type="protein sequence ID" value="BAA90667.1"/>
    <property type="molecule type" value="mRNA"/>
</dbReference>
<dbReference type="EMBL" id="AL136709">
    <property type="protein sequence ID" value="CAB66644.1"/>
    <property type="molecule type" value="mRNA"/>
</dbReference>
<dbReference type="EMBL" id="AC004797">
    <property type="status" value="NOT_ANNOTATED_CDS"/>
    <property type="molecule type" value="Genomic_DNA"/>
</dbReference>
<dbReference type="EMBL" id="AC069454">
    <property type="status" value="NOT_ANNOTATED_CDS"/>
    <property type="molecule type" value="Genomic_DNA"/>
</dbReference>
<dbReference type="EMBL" id="BC007780">
    <property type="protein sequence ID" value="AAH07780.1"/>
    <property type="molecule type" value="mRNA"/>
</dbReference>
<dbReference type="CCDS" id="CCDS11546.1">
    <molecule id="Q9P2A4-1"/>
</dbReference>
<dbReference type="CCDS" id="CCDS45725.1">
    <molecule id="Q9P2A4-2"/>
</dbReference>
<dbReference type="RefSeq" id="NP_001128658.2">
    <molecule id="Q9P2A4-2"/>
    <property type="nucleotide sequence ID" value="NM_001135186.2"/>
</dbReference>
<dbReference type="RefSeq" id="NP_057512.2">
    <molecule id="Q9P2A4-1"/>
    <property type="nucleotide sequence ID" value="NM_016428.3"/>
</dbReference>
<dbReference type="SMR" id="Q9P2A4"/>
<dbReference type="BioGRID" id="119389">
    <property type="interactions" value="91"/>
</dbReference>
<dbReference type="CORUM" id="Q9P2A4"/>
<dbReference type="FunCoup" id="Q9P2A4">
    <property type="interactions" value="63"/>
</dbReference>
<dbReference type="IntAct" id="Q9P2A4">
    <property type="interactions" value="75"/>
</dbReference>
<dbReference type="MINT" id="Q9P2A4"/>
<dbReference type="STRING" id="9606.ENSP00000225941"/>
<dbReference type="GlyGen" id="Q9P2A4">
    <property type="glycosylation" value="1 site"/>
</dbReference>
<dbReference type="iPTMnet" id="Q9P2A4"/>
<dbReference type="PhosphoSitePlus" id="Q9P2A4"/>
<dbReference type="BioMuta" id="ABI3"/>
<dbReference type="DMDM" id="296434384"/>
<dbReference type="jPOST" id="Q9P2A4"/>
<dbReference type="MassIVE" id="Q9P2A4"/>
<dbReference type="PaxDb" id="9606-ENSP00000225941"/>
<dbReference type="PeptideAtlas" id="Q9P2A4"/>
<dbReference type="ProteomicsDB" id="83763">
    <molecule id="Q9P2A4-1"/>
</dbReference>
<dbReference type="ProteomicsDB" id="83764">
    <molecule id="Q9P2A4-2"/>
</dbReference>
<dbReference type="Antibodypedia" id="53503">
    <property type="antibodies" value="90 antibodies from 22 providers"/>
</dbReference>
<dbReference type="DNASU" id="51225"/>
<dbReference type="Ensembl" id="ENST00000225941.6">
    <molecule id="Q9P2A4-1"/>
    <property type="protein sequence ID" value="ENSP00000225941.1"/>
    <property type="gene ID" value="ENSG00000108798.9"/>
</dbReference>
<dbReference type="Ensembl" id="ENST00000419580.6">
    <molecule id="Q9P2A4-2"/>
    <property type="protein sequence ID" value="ENSP00000406651.2"/>
    <property type="gene ID" value="ENSG00000108798.9"/>
</dbReference>
<dbReference type="GeneID" id="51225"/>
<dbReference type="KEGG" id="hsa:51225"/>
<dbReference type="MANE-Select" id="ENST00000225941.6">
    <property type="protein sequence ID" value="ENSP00000225941.1"/>
    <property type="RefSeq nucleotide sequence ID" value="NM_016428.3"/>
    <property type="RefSeq protein sequence ID" value="NP_057512.2"/>
</dbReference>
<dbReference type="UCSC" id="uc002iop.1">
    <molecule id="Q9P2A4-1"/>
    <property type="organism name" value="human"/>
</dbReference>
<dbReference type="AGR" id="HGNC:29859"/>
<dbReference type="CTD" id="51225"/>
<dbReference type="DisGeNET" id="51225"/>
<dbReference type="GeneCards" id="ABI3"/>
<dbReference type="HGNC" id="HGNC:29859">
    <property type="gene designation" value="ABI3"/>
</dbReference>
<dbReference type="HPA" id="ENSG00000108798">
    <property type="expression patterns" value="Tissue enhanced (lymphoid)"/>
</dbReference>
<dbReference type="MIM" id="606363">
    <property type="type" value="gene"/>
</dbReference>
<dbReference type="neXtProt" id="NX_Q9P2A4"/>
<dbReference type="NIAGADS" id="ENSG00000108798"/>
<dbReference type="OpenTargets" id="ENSG00000108798"/>
<dbReference type="PharmGKB" id="PA134951642"/>
<dbReference type="VEuPathDB" id="HostDB:ENSG00000108798"/>
<dbReference type="eggNOG" id="KOG2546">
    <property type="taxonomic scope" value="Eukaryota"/>
</dbReference>
<dbReference type="GeneTree" id="ENSGT00940000161380"/>
<dbReference type="HOGENOM" id="CLU_035421_0_0_1"/>
<dbReference type="InParanoid" id="Q9P2A4"/>
<dbReference type="OMA" id="NVAYHIQ"/>
<dbReference type="OrthoDB" id="5971719at2759"/>
<dbReference type="PAN-GO" id="Q9P2A4">
    <property type="GO annotations" value="4 GO annotations based on evolutionary models"/>
</dbReference>
<dbReference type="PhylomeDB" id="Q9P2A4"/>
<dbReference type="TreeFam" id="TF314303"/>
<dbReference type="PathwayCommons" id="Q9P2A4"/>
<dbReference type="SignaLink" id="Q9P2A4"/>
<dbReference type="SIGNOR" id="Q9P2A4"/>
<dbReference type="BioGRID-ORCS" id="51225">
    <property type="hits" value="8 hits in 1135 CRISPR screens"/>
</dbReference>
<dbReference type="ChiTaRS" id="ABI3">
    <property type="organism name" value="human"/>
</dbReference>
<dbReference type="GeneWiki" id="ABI3"/>
<dbReference type="GenomeRNAi" id="51225"/>
<dbReference type="Pharos" id="Q9P2A4">
    <property type="development level" value="Tbio"/>
</dbReference>
<dbReference type="PRO" id="PR:Q9P2A4"/>
<dbReference type="Proteomes" id="UP000005640">
    <property type="component" value="Chromosome 17"/>
</dbReference>
<dbReference type="RNAct" id="Q9P2A4">
    <property type="molecule type" value="protein"/>
</dbReference>
<dbReference type="Bgee" id="ENSG00000108798">
    <property type="expression patterns" value="Expressed in granulocyte and 137 other cell types or tissues"/>
</dbReference>
<dbReference type="ExpressionAtlas" id="Q9P2A4">
    <property type="expression patterns" value="baseline and differential"/>
</dbReference>
<dbReference type="GO" id="GO:0098858">
    <property type="term" value="C:actin-based cell projection"/>
    <property type="evidence" value="ECO:0000318"/>
    <property type="project" value="GO_Central"/>
</dbReference>
<dbReference type="GO" id="GO:0005737">
    <property type="term" value="C:cytoplasm"/>
    <property type="evidence" value="ECO:0000314"/>
    <property type="project" value="LIFEdb"/>
</dbReference>
<dbReference type="GO" id="GO:0043198">
    <property type="term" value="C:dendritic shaft"/>
    <property type="evidence" value="ECO:0000250"/>
    <property type="project" value="ARUK-UCL"/>
</dbReference>
<dbReference type="GO" id="GO:0043197">
    <property type="term" value="C:dendritic spine"/>
    <property type="evidence" value="ECO:0000250"/>
    <property type="project" value="ARUK-UCL"/>
</dbReference>
<dbReference type="GO" id="GO:0098978">
    <property type="term" value="C:glutamatergic synapse"/>
    <property type="evidence" value="ECO:0007669"/>
    <property type="project" value="Ensembl"/>
</dbReference>
<dbReference type="GO" id="GO:0030027">
    <property type="term" value="C:lamellipodium"/>
    <property type="evidence" value="ECO:0000314"/>
    <property type="project" value="MGI"/>
</dbReference>
<dbReference type="GO" id="GO:0016020">
    <property type="term" value="C:membrane"/>
    <property type="evidence" value="ECO:0007005"/>
    <property type="project" value="UniProtKB"/>
</dbReference>
<dbReference type="GO" id="GO:0014069">
    <property type="term" value="C:postsynaptic density"/>
    <property type="evidence" value="ECO:0000250"/>
    <property type="project" value="ARUK-UCL"/>
</dbReference>
<dbReference type="GO" id="GO:0031209">
    <property type="term" value="C:SCAR complex"/>
    <property type="evidence" value="ECO:0000314"/>
    <property type="project" value="ARUK-UCL"/>
</dbReference>
<dbReference type="GO" id="GO:0051015">
    <property type="term" value="F:actin filament binding"/>
    <property type="evidence" value="ECO:0000250"/>
    <property type="project" value="ARUK-UCL"/>
</dbReference>
<dbReference type="GO" id="GO:0042802">
    <property type="term" value="F:identical protein binding"/>
    <property type="evidence" value="ECO:0000353"/>
    <property type="project" value="IntAct"/>
</dbReference>
<dbReference type="GO" id="GO:0035591">
    <property type="term" value="F:signaling adaptor activity"/>
    <property type="evidence" value="ECO:0000318"/>
    <property type="project" value="GO_Central"/>
</dbReference>
<dbReference type="GO" id="GO:0030036">
    <property type="term" value="P:actin cytoskeleton organization"/>
    <property type="evidence" value="ECO:0000250"/>
    <property type="project" value="ARUK-UCL"/>
</dbReference>
<dbReference type="GO" id="GO:0048858">
    <property type="term" value="P:cell projection morphogenesis"/>
    <property type="evidence" value="ECO:0000318"/>
    <property type="project" value="GO_Central"/>
</dbReference>
<dbReference type="GO" id="GO:0002357">
    <property type="term" value="P:defense response to tumor cell"/>
    <property type="evidence" value="ECO:0000315"/>
    <property type="project" value="ARUK-UCL"/>
</dbReference>
<dbReference type="GO" id="GO:0098885">
    <property type="term" value="P:modification of postsynaptic actin cytoskeleton"/>
    <property type="evidence" value="ECO:0007669"/>
    <property type="project" value="Ensembl"/>
</dbReference>
<dbReference type="GO" id="GO:0010593">
    <property type="term" value="P:negative regulation of lamellipodium assembly"/>
    <property type="evidence" value="ECO:0000250"/>
    <property type="project" value="ARUK-UCL"/>
</dbReference>
<dbReference type="GO" id="GO:1903077">
    <property type="term" value="P:negative regulation of protein localization to plasma membrane"/>
    <property type="evidence" value="ECO:0000250"/>
    <property type="project" value="ARUK-UCL"/>
</dbReference>
<dbReference type="GO" id="GO:1900028">
    <property type="term" value="P:negative regulation of ruffle assembly"/>
    <property type="evidence" value="ECO:0000303"/>
    <property type="project" value="ARUK-UCL"/>
</dbReference>
<dbReference type="GO" id="GO:0001764">
    <property type="term" value="P:neuron migration"/>
    <property type="evidence" value="ECO:0000318"/>
    <property type="project" value="GO_Central"/>
</dbReference>
<dbReference type="GO" id="GO:2000774">
    <property type="term" value="P:positive regulation of cellular senescence"/>
    <property type="evidence" value="ECO:0000315"/>
    <property type="project" value="ARUK-UCL"/>
</dbReference>
<dbReference type="GO" id="GO:0030334">
    <property type="term" value="P:regulation of cell migration"/>
    <property type="evidence" value="ECO:0000314"/>
    <property type="project" value="MGI"/>
</dbReference>
<dbReference type="GO" id="GO:0061001">
    <property type="term" value="P:regulation of dendritic spine morphogenesis"/>
    <property type="evidence" value="ECO:0000250"/>
    <property type="project" value="ARUK-UCL"/>
</dbReference>
<dbReference type="GO" id="GO:0099151">
    <property type="term" value="P:regulation of postsynaptic density assembly"/>
    <property type="evidence" value="ECO:0000250"/>
    <property type="project" value="ARUK-UCL"/>
</dbReference>
<dbReference type="CDD" id="cd11826">
    <property type="entry name" value="SH3_Abi"/>
    <property type="match status" value="1"/>
</dbReference>
<dbReference type="FunFam" id="2.30.30.40:FF:000170">
    <property type="entry name" value="ABI gene family member 3"/>
    <property type="match status" value="1"/>
</dbReference>
<dbReference type="Gene3D" id="6.10.140.1620">
    <property type="match status" value="1"/>
</dbReference>
<dbReference type="Gene3D" id="2.30.30.40">
    <property type="entry name" value="SH3 Domains"/>
    <property type="match status" value="1"/>
</dbReference>
<dbReference type="InterPro" id="IPR028457">
    <property type="entry name" value="ABI"/>
</dbReference>
<dbReference type="InterPro" id="IPR028455">
    <property type="entry name" value="ABI3_SH3"/>
</dbReference>
<dbReference type="InterPro" id="IPR012849">
    <property type="entry name" value="Abl-interactor_HHR_dom"/>
</dbReference>
<dbReference type="InterPro" id="IPR036028">
    <property type="entry name" value="SH3-like_dom_sf"/>
</dbReference>
<dbReference type="InterPro" id="IPR001452">
    <property type="entry name" value="SH3_domain"/>
</dbReference>
<dbReference type="PANTHER" id="PTHR10460:SF7">
    <property type="entry name" value="ABI GENE FAMILY MEMBER 3"/>
    <property type="match status" value="1"/>
</dbReference>
<dbReference type="PANTHER" id="PTHR10460">
    <property type="entry name" value="ABL INTERACTOR FAMILY MEMBER"/>
    <property type="match status" value="1"/>
</dbReference>
<dbReference type="Pfam" id="PF07815">
    <property type="entry name" value="Abi_HHR"/>
    <property type="match status" value="1"/>
</dbReference>
<dbReference type="Pfam" id="PF14604">
    <property type="entry name" value="SH3_9"/>
    <property type="match status" value="1"/>
</dbReference>
<dbReference type="PRINTS" id="PR00452">
    <property type="entry name" value="SH3DOMAIN"/>
</dbReference>
<dbReference type="SMART" id="SM00326">
    <property type="entry name" value="SH3"/>
    <property type="match status" value="1"/>
</dbReference>
<dbReference type="SUPFAM" id="SSF50044">
    <property type="entry name" value="SH3-domain"/>
    <property type="match status" value="1"/>
</dbReference>
<dbReference type="PROSITE" id="PS50002">
    <property type="entry name" value="SH3"/>
    <property type="match status" value="1"/>
</dbReference>
<accession>Q9P2A4</accession>
<accession>C9IZN8</accession>
<accession>Q9H0P6</accession>
<sequence>MAELQQLQEFEIPTGREALRGNHSALLRVADYCEDNYVQATDKRKALEETMAFTTQALASVAYQVGNLAGHTLRMLDLQGAALRQVEARVSTLGQMVNMHMEKVARREIGTLATVQRLPPGQKVIAPENLPPLTPYCRRPLNFGCLDDIGHGIKDLSTQLSRTGTLSRKSIKAPATPASATLGRPPRIPEPVHLPVVPDGRLSAASSAFSLASAGSAEGVGGAPTPKGQAAPPAPPLPSSLDPPPPPAAVEVFQRPPTLEELSPPPPDEELPLPLDLPPPPPLDGDELGLPPPPPGFGPDEPSWVPASYLEKVVTLYPYTSQKDNELSFSEGTVICVTRRYSDGWCEGVSSEGTGFFPGNYVEPSC</sequence>
<feature type="chain" id="PRO_0000191792" description="ABI gene family member 3">
    <location>
        <begin position="1"/>
        <end position="366"/>
    </location>
</feature>
<feature type="domain" description="SH3" evidence="3">
    <location>
        <begin position="308"/>
        <end position="366"/>
    </location>
</feature>
<feature type="region of interest" description="Disordered" evidence="4">
    <location>
        <begin position="161"/>
        <end position="195"/>
    </location>
</feature>
<feature type="region of interest" description="Disordered" evidence="4">
    <location>
        <begin position="215"/>
        <end position="302"/>
    </location>
</feature>
<feature type="coiled-coil region" evidence="2">
    <location>
        <begin position="33"/>
        <end position="61"/>
    </location>
</feature>
<feature type="compositionally biased region" description="Pro residues" evidence="4">
    <location>
        <begin position="232"/>
        <end position="248"/>
    </location>
</feature>
<feature type="modified residue" description="Phosphoserine" evidence="11">
    <location>
        <position position="213"/>
    </location>
</feature>
<feature type="modified residue" description="Phosphoserine" evidence="11">
    <location>
        <position position="216"/>
    </location>
</feature>
<feature type="modified residue" description="Phosphoserine" evidence="11">
    <location>
        <position position="342"/>
    </location>
</feature>
<feature type="splice variant" id="VSP_041467" description="In isoform 2." evidence="10">
    <location>
        <begin position="90"/>
        <end position="95"/>
    </location>
</feature>
<feature type="sequence variant" id="VAR_022030" description="In dbSNP:rs2233369." evidence="6">
    <original>R</original>
    <variation>Q</variation>
    <location>
        <position position="44"/>
    </location>
</feature>
<feature type="sequence variant" id="VAR_060243" description="In dbSNP:rs616338.">
    <original>S</original>
    <variation>F</variation>
    <location>
        <position position="203"/>
    </location>
</feature>
<feature type="sequence variant" id="VAR_060993" description="In dbSNP:rs616338." evidence="5 6 9 11">
    <original>F</original>
    <variation>S</variation>
    <location>
        <position position="209"/>
    </location>
</feature>